<organism>
    <name type="scientific">Sinorhizobium fredii (strain NBRC 101917 / NGR234)</name>
    <dbReference type="NCBI Taxonomy" id="394"/>
    <lineage>
        <taxon>Bacteria</taxon>
        <taxon>Pseudomonadati</taxon>
        <taxon>Pseudomonadota</taxon>
        <taxon>Alphaproteobacteria</taxon>
        <taxon>Hyphomicrobiales</taxon>
        <taxon>Rhizobiaceae</taxon>
        <taxon>Sinorhizobium/Ensifer group</taxon>
        <taxon>Sinorhizobium</taxon>
    </lineage>
</organism>
<proteinExistence type="inferred from homology"/>
<sequence length="279" mass="29503">MTARMEQRFADVAAEGRPVLVTYFMGGDPDFETSLSIMQALPKAGADVIELGVPFSDPMADGPAIQLAGQRALKAGQTLAKTLELARRFRAEDQRTPIVLMGYYNPIYIYGVERFLNDAVEAGVDGLIVVDLPPEMDDELCIPALKKGISFIRLATPTTDDRRLPKVLENTSGFVYYVSMTGITGSALPDPSRIAGAVARIKSHTSLPVCVGFGVKTAEHARVIGASADGVVVGTAIVNQIASSLTEEGRVTEATVPGVEALVRGLSAGVRAARLAAAE</sequence>
<keyword id="KW-0028">Amino-acid biosynthesis</keyword>
<keyword id="KW-0057">Aromatic amino acid biosynthesis</keyword>
<keyword id="KW-0456">Lyase</keyword>
<keyword id="KW-1185">Reference proteome</keyword>
<keyword id="KW-0822">Tryptophan biosynthesis</keyword>
<name>TRPA_SINFN</name>
<gene>
    <name evidence="1" type="primary">trpA</name>
    <name type="ordered locus">NGR_c33790</name>
</gene>
<comment type="function">
    <text evidence="1">The alpha subunit is responsible for the aldol cleavage of indoleglycerol phosphate to indole and glyceraldehyde 3-phosphate.</text>
</comment>
<comment type="catalytic activity">
    <reaction evidence="1">
        <text>(1S,2R)-1-C-(indol-3-yl)glycerol 3-phosphate + L-serine = D-glyceraldehyde 3-phosphate + L-tryptophan + H2O</text>
        <dbReference type="Rhea" id="RHEA:10532"/>
        <dbReference type="ChEBI" id="CHEBI:15377"/>
        <dbReference type="ChEBI" id="CHEBI:33384"/>
        <dbReference type="ChEBI" id="CHEBI:57912"/>
        <dbReference type="ChEBI" id="CHEBI:58866"/>
        <dbReference type="ChEBI" id="CHEBI:59776"/>
        <dbReference type="EC" id="4.2.1.20"/>
    </reaction>
</comment>
<comment type="pathway">
    <text evidence="1">Amino-acid biosynthesis; L-tryptophan biosynthesis; L-tryptophan from chorismate: step 5/5.</text>
</comment>
<comment type="subunit">
    <text evidence="1">Tetramer of two alpha and two beta chains.</text>
</comment>
<comment type="similarity">
    <text evidence="1">Belongs to the TrpA family.</text>
</comment>
<evidence type="ECO:0000255" key="1">
    <source>
        <dbReference type="HAMAP-Rule" id="MF_00131"/>
    </source>
</evidence>
<reference key="1">
    <citation type="journal article" date="2009" name="Appl. Environ. Microbiol.">
        <title>Rhizobium sp. strain NGR234 possesses a remarkable number of secretion systems.</title>
        <authorList>
            <person name="Schmeisser C."/>
            <person name="Liesegang H."/>
            <person name="Krysciak D."/>
            <person name="Bakkou N."/>
            <person name="Le Quere A."/>
            <person name="Wollherr A."/>
            <person name="Heinemeyer I."/>
            <person name="Morgenstern B."/>
            <person name="Pommerening-Roeser A."/>
            <person name="Flores M."/>
            <person name="Palacios R."/>
            <person name="Brenner S."/>
            <person name="Gottschalk G."/>
            <person name="Schmitz R.A."/>
            <person name="Broughton W.J."/>
            <person name="Perret X."/>
            <person name="Strittmatter A.W."/>
            <person name="Streit W.R."/>
        </authorList>
    </citation>
    <scope>NUCLEOTIDE SEQUENCE [LARGE SCALE GENOMIC DNA]</scope>
    <source>
        <strain>NBRC 101917 / NGR234</strain>
    </source>
</reference>
<dbReference type="EC" id="4.2.1.20" evidence="1"/>
<dbReference type="EMBL" id="CP001389">
    <property type="protein sequence ID" value="ACP27109.1"/>
    <property type="molecule type" value="Genomic_DNA"/>
</dbReference>
<dbReference type="RefSeq" id="WP_012709856.1">
    <property type="nucleotide sequence ID" value="NC_012587.1"/>
</dbReference>
<dbReference type="RefSeq" id="YP_002827862.1">
    <property type="nucleotide sequence ID" value="NC_012587.1"/>
</dbReference>
<dbReference type="SMR" id="C3MBA0"/>
<dbReference type="STRING" id="394.NGR_c33790"/>
<dbReference type="KEGG" id="rhi:NGR_c33790"/>
<dbReference type="PATRIC" id="fig|394.7.peg.6227"/>
<dbReference type="eggNOG" id="COG0159">
    <property type="taxonomic scope" value="Bacteria"/>
</dbReference>
<dbReference type="HOGENOM" id="CLU_016734_0_0_5"/>
<dbReference type="OrthoDB" id="9804578at2"/>
<dbReference type="UniPathway" id="UPA00035">
    <property type="reaction ID" value="UER00044"/>
</dbReference>
<dbReference type="Proteomes" id="UP000001054">
    <property type="component" value="Chromosome"/>
</dbReference>
<dbReference type="GO" id="GO:0005829">
    <property type="term" value="C:cytosol"/>
    <property type="evidence" value="ECO:0007669"/>
    <property type="project" value="TreeGrafter"/>
</dbReference>
<dbReference type="GO" id="GO:0004834">
    <property type="term" value="F:tryptophan synthase activity"/>
    <property type="evidence" value="ECO:0007669"/>
    <property type="project" value="UniProtKB-UniRule"/>
</dbReference>
<dbReference type="CDD" id="cd04724">
    <property type="entry name" value="Tryptophan_synthase_alpha"/>
    <property type="match status" value="1"/>
</dbReference>
<dbReference type="FunFam" id="3.20.20.70:FF:000037">
    <property type="entry name" value="Tryptophan synthase alpha chain"/>
    <property type="match status" value="1"/>
</dbReference>
<dbReference type="Gene3D" id="3.20.20.70">
    <property type="entry name" value="Aldolase class I"/>
    <property type="match status" value="1"/>
</dbReference>
<dbReference type="HAMAP" id="MF_00131">
    <property type="entry name" value="Trp_synth_alpha"/>
    <property type="match status" value="1"/>
</dbReference>
<dbReference type="InterPro" id="IPR013785">
    <property type="entry name" value="Aldolase_TIM"/>
</dbReference>
<dbReference type="InterPro" id="IPR011060">
    <property type="entry name" value="RibuloseP-bd_barrel"/>
</dbReference>
<dbReference type="InterPro" id="IPR018204">
    <property type="entry name" value="Trp_synthase_alpha_AS"/>
</dbReference>
<dbReference type="InterPro" id="IPR002028">
    <property type="entry name" value="Trp_synthase_suA"/>
</dbReference>
<dbReference type="NCBIfam" id="TIGR00262">
    <property type="entry name" value="trpA"/>
    <property type="match status" value="1"/>
</dbReference>
<dbReference type="PANTHER" id="PTHR43406:SF1">
    <property type="entry name" value="TRYPTOPHAN SYNTHASE ALPHA CHAIN, CHLOROPLASTIC"/>
    <property type="match status" value="1"/>
</dbReference>
<dbReference type="PANTHER" id="PTHR43406">
    <property type="entry name" value="TRYPTOPHAN SYNTHASE, ALPHA CHAIN"/>
    <property type="match status" value="1"/>
</dbReference>
<dbReference type="Pfam" id="PF00290">
    <property type="entry name" value="Trp_syntA"/>
    <property type="match status" value="1"/>
</dbReference>
<dbReference type="SUPFAM" id="SSF51366">
    <property type="entry name" value="Ribulose-phoshate binding barrel"/>
    <property type="match status" value="1"/>
</dbReference>
<dbReference type="PROSITE" id="PS00167">
    <property type="entry name" value="TRP_SYNTHASE_ALPHA"/>
    <property type="match status" value="1"/>
</dbReference>
<feature type="chain" id="PRO_1000198721" description="Tryptophan synthase alpha chain">
    <location>
        <begin position="1"/>
        <end position="279"/>
    </location>
</feature>
<feature type="active site" description="Proton acceptor" evidence="1">
    <location>
        <position position="50"/>
    </location>
</feature>
<feature type="active site" description="Proton acceptor" evidence="1">
    <location>
        <position position="61"/>
    </location>
</feature>
<protein>
    <recommendedName>
        <fullName evidence="1">Tryptophan synthase alpha chain</fullName>
        <ecNumber evidence="1">4.2.1.20</ecNumber>
    </recommendedName>
</protein>
<accession>C3MBA0</accession>